<feature type="chain" id="PRO_0000225610" description="Microtubule-associated protein mmb1">
    <location>
        <begin position="1"/>
        <end position="501"/>
    </location>
</feature>
<feature type="region of interest" description="Disordered" evidence="1">
    <location>
        <begin position="61"/>
        <end position="274"/>
    </location>
</feature>
<feature type="region of interest" description="Disordered" evidence="1">
    <location>
        <begin position="328"/>
        <end position="381"/>
    </location>
</feature>
<feature type="region of interest" description="Disordered" evidence="1">
    <location>
        <begin position="478"/>
        <end position="501"/>
    </location>
</feature>
<feature type="compositionally biased region" description="Polar residues" evidence="1">
    <location>
        <begin position="61"/>
        <end position="95"/>
    </location>
</feature>
<feature type="compositionally biased region" description="Polar residues" evidence="1">
    <location>
        <begin position="103"/>
        <end position="122"/>
    </location>
</feature>
<feature type="compositionally biased region" description="Polar residues" evidence="1">
    <location>
        <begin position="132"/>
        <end position="168"/>
    </location>
</feature>
<feature type="compositionally biased region" description="Low complexity" evidence="1">
    <location>
        <begin position="234"/>
        <end position="252"/>
    </location>
</feature>
<feature type="compositionally biased region" description="Polar residues" evidence="1">
    <location>
        <begin position="253"/>
        <end position="274"/>
    </location>
</feature>
<feature type="compositionally biased region" description="Polar residues" evidence="1">
    <location>
        <begin position="367"/>
        <end position="381"/>
    </location>
</feature>
<feature type="compositionally biased region" description="Polar residues" evidence="1">
    <location>
        <begin position="478"/>
        <end position="495"/>
    </location>
</feature>
<sequence length="501" mass="53763">MLQRLEQLQMQTSNILKELHSTSIFTDSTTSQLHNGGENSVMDTEESSAIDKLSASLQQVNISSPSVPTSQSRVTQGQSLGNTQISNPTSKTNNVRAKARNIRNPSQRLRPSTSLARLSNNAPRIPKEASLHENSISSKESPSVTTSKHVATITKPSTSSIARMSSNARIAAIPRAKSSMAVRSPSRLGNGPNVRSPKVGFNAKSDDSPVVKSPGSNDKPSASPRISVRSLGNSSVVRPPTRTSTTRPLSRVNVTNASGSISKNSTSPSKVKVNASTKIVRPVSAAQTVRPGSRIFRENSASNTQRPNVSATSNSTVRVASSLAVRPVSRNAQARTPSRLEQREVNVKNSSAKIVRPGTSLGVRSPSRIQSTLSSRTTTGNVRTKAANIVRPSSSINRRPPSSINQRPPSNLRILAPSRSRATIHERPSSSILHRHAHSLTSSSFSTKTLATTKEIQNSPTLVESSTVVHHDPSYLQNQTSEINDTNHSSHSSPLDLNRMI</sequence>
<dbReference type="EMBL" id="CU329671">
    <property type="protein sequence ID" value="CAK9840379.1"/>
    <property type="molecule type" value="Genomic_DNA"/>
</dbReference>
<dbReference type="EMBL" id="AB027772">
    <property type="protein sequence ID" value="BAA87076.1"/>
    <property type="molecule type" value="Genomic_DNA"/>
</dbReference>
<dbReference type="PIR" id="T39983">
    <property type="entry name" value="T39983"/>
</dbReference>
<dbReference type="RefSeq" id="NP_596075.2">
    <property type="nucleotide sequence ID" value="NM_001021987.2"/>
</dbReference>
<dbReference type="BioGRID" id="276965">
    <property type="interactions" value="66"/>
</dbReference>
<dbReference type="STRING" id="284812.O74779"/>
<dbReference type="iPTMnet" id="O74779"/>
<dbReference type="PaxDb" id="4896-SPBC25B2.07c.1"/>
<dbReference type="EnsemblFungi" id="SPBC25B2.07c.1">
    <property type="protein sequence ID" value="SPBC25B2.07c.1:pep"/>
    <property type="gene ID" value="SPBC25B2.07c"/>
</dbReference>
<dbReference type="GeneID" id="2540437"/>
<dbReference type="KEGG" id="spo:2540437"/>
<dbReference type="PomBase" id="SPBC25B2.07c">
    <property type="gene designation" value="mmb1"/>
</dbReference>
<dbReference type="HOGENOM" id="CLU_544183_0_0_1"/>
<dbReference type="InParanoid" id="O74779"/>
<dbReference type="OMA" id="QMQTSNI"/>
<dbReference type="PRO" id="PR:O74779"/>
<dbReference type="Proteomes" id="UP000002485">
    <property type="component" value="Chromosome II"/>
</dbReference>
<dbReference type="GO" id="GO:0000235">
    <property type="term" value="C:astral microtubule"/>
    <property type="evidence" value="ECO:0000314"/>
    <property type="project" value="PomBase"/>
</dbReference>
<dbReference type="GO" id="GO:0005881">
    <property type="term" value="C:cytoplasmic microtubule"/>
    <property type="evidence" value="ECO:0000314"/>
    <property type="project" value="PomBase"/>
</dbReference>
<dbReference type="GO" id="GO:0031315">
    <property type="term" value="C:extrinsic component of mitochondrial outer membrane"/>
    <property type="evidence" value="ECO:0000314"/>
    <property type="project" value="PomBase"/>
</dbReference>
<dbReference type="GO" id="GO:0015630">
    <property type="term" value="C:microtubule cytoskeleton"/>
    <property type="evidence" value="ECO:0007005"/>
    <property type="project" value="PomBase"/>
</dbReference>
<dbReference type="GO" id="GO:0008017">
    <property type="term" value="F:microtubule binding"/>
    <property type="evidence" value="ECO:0000314"/>
    <property type="project" value="PomBase"/>
</dbReference>
<dbReference type="GO" id="GO:0048312">
    <property type="term" value="P:intracellular distribution of mitochondria"/>
    <property type="evidence" value="ECO:0000315"/>
    <property type="project" value="PomBase"/>
</dbReference>
<dbReference type="GO" id="GO:0051321">
    <property type="term" value="P:meiotic cell cycle"/>
    <property type="evidence" value="ECO:0007669"/>
    <property type="project" value="UniProtKB-KW"/>
</dbReference>
<keyword id="KW-0963">Cytoplasm</keyword>
<keyword id="KW-0206">Cytoskeleton</keyword>
<keyword id="KW-0469">Meiosis</keyword>
<keyword id="KW-0493">Microtubule</keyword>
<keyword id="KW-1185">Reference proteome</keyword>
<gene>
    <name evidence="8" type="primary">mmb1</name>
    <name evidence="7" type="synonym">mug164</name>
    <name evidence="11" type="ORF">SPBC25B2.07c</name>
</gene>
<evidence type="ECO:0000256" key="1">
    <source>
        <dbReference type="SAM" id="MobiDB-lite"/>
    </source>
</evidence>
<evidence type="ECO:0000269" key="2">
    <source>
    </source>
</evidence>
<evidence type="ECO:0000269" key="3">
    <source>
    </source>
</evidence>
<evidence type="ECO:0000269" key="4">
    <source>
    </source>
</evidence>
<evidence type="ECO:0000269" key="5">
    <source>
    </source>
</evidence>
<evidence type="ECO:0000269" key="6">
    <source>
    </source>
</evidence>
<evidence type="ECO:0000303" key="7">
    <source>
    </source>
</evidence>
<evidence type="ECO:0000303" key="8">
    <source>
    </source>
</evidence>
<evidence type="ECO:0000305" key="9"/>
<evidence type="ECO:0000312" key="10">
    <source>
        <dbReference type="EMBL" id="BAA87076.1"/>
    </source>
</evidence>
<evidence type="ECO:0000312" key="11">
    <source>
        <dbReference type="PomBase" id="SPBC25B2.07c"/>
    </source>
</evidence>
<proteinExistence type="evidence at protein level"/>
<organism>
    <name type="scientific">Schizosaccharomyces pombe (strain 972 / ATCC 24843)</name>
    <name type="common">Fission yeast</name>
    <dbReference type="NCBI Taxonomy" id="284812"/>
    <lineage>
        <taxon>Eukaryota</taxon>
        <taxon>Fungi</taxon>
        <taxon>Dikarya</taxon>
        <taxon>Ascomycota</taxon>
        <taxon>Taphrinomycotina</taxon>
        <taxon>Schizosaccharomycetes</taxon>
        <taxon>Schizosaccharomycetales</taxon>
        <taxon>Schizosaccharomycetaceae</taxon>
        <taxon>Schizosaccharomyces</taxon>
    </lineage>
</organism>
<comment type="function">
    <text evidence="3 4 6">Involved in the cell polarity process and in regulation of microtubule growth. Has a role in meiosis (PubMed:15797925, PubMed:16303567). Involved in microtubule dynamics. Binds to mitochondria and microtubules, attaching the tubular mitochondria to the microtubule lattice at multiple discrete interaction sites (PubMed:21856157).</text>
</comment>
<comment type="subcellular location">
    <subcellularLocation>
        <location evidence="2 3 5 6">Cytoplasm</location>
        <location evidence="2 3 5 6">Cytoskeleton</location>
    </subcellularLocation>
    <text evidence="6">Microtubule-associated. Found on all cytoplasmic microtubules throughout the cell cycle, such as the interphase, the astral, and the postanaphase arrays of microtubules.</text>
</comment>
<comment type="disruption phenotype">
    <text evidence="6">Leads to mitochondria aggregation and segregation defects.</text>
</comment>
<name>MMB1_SCHPO</name>
<accession>O74779</accession>
<accession>A0AAN2H8D3</accession>
<protein>
    <recommendedName>
        <fullName evidence="9">Microtubule-associated protein mmb1</fullName>
    </recommendedName>
    <alternativeName>
        <fullName>Meiotically up-regulated gene 164 protein</fullName>
    </alternativeName>
    <alternativeName>
        <fullName evidence="8">Mitochondrial microtubule binding protein 1</fullName>
    </alternativeName>
</protein>
<reference key="1">
    <citation type="journal article" date="2002" name="Nature">
        <title>The genome sequence of Schizosaccharomyces pombe.</title>
        <authorList>
            <person name="Wood V."/>
            <person name="Gwilliam R."/>
            <person name="Rajandream M.A."/>
            <person name="Lyne M.H."/>
            <person name="Lyne R."/>
            <person name="Stewart A."/>
            <person name="Sgouros J.G."/>
            <person name="Peat N."/>
            <person name="Hayles J."/>
            <person name="Baker S.G."/>
            <person name="Basham D."/>
            <person name="Bowman S."/>
            <person name="Brooks K."/>
            <person name="Brown D."/>
            <person name="Brown S."/>
            <person name="Chillingworth T."/>
            <person name="Churcher C.M."/>
            <person name="Collins M."/>
            <person name="Connor R."/>
            <person name="Cronin A."/>
            <person name="Davis P."/>
            <person name="Feltwell T."/>
            <person name="Fraser A."/>
            <person name="Gentles S."/>
            <person name="Goble A."/>
            <person name="Hamlin N."/>
            <person name="Harris D.E."/>
            <person name="Hidalgo J."/>
            <person name="Hodgson G."/>
            <person name="Holroyd S."/>
            <person name="Hornsby T."/>
            <person name="Howarth S."/>
            <person name="Huckle E.J."/>
            <person name="Hunt S."/>
            <person name="Jagels K."/>
            <person name="James K.D."/>
            <person name="Jones L."/>
            <person name="Jones M."/>
            <person name="Leather S."/>
            <person name="McDonald S."/>
            <person name="McLean J."/>
            <person name="Mooney P."/>
            <person name="Moule S."/>
            <person name="Mungall K.L."/>
            <person name="Murphy L.D."/>
            <person name="Niblett D."/>
            <person name="Odell C."/>
            <person name="Oliver K."/>
            <person name="O'Neil S."/>
            <person name="Pearson D."/>
            <person name="Quail M.A."/>
            <person name="Rabbinowitsch E."/>
            <person name="Rutherford K.M."/>
            <person name="Rutter S."/>
            <person name="Saunders D."/>
            <person name="Seeger K."/>
            <person name="Sharp S."/>
            <person name="Skelton J."/>
            <person name="Simmonds M.N."/>
            <person name="Squares R."/>
            <person name="Squares S."/>
            <person name="Stevens K."/>
            <person name="Taylor K."/>
            <person name="Taylor R.G."/>
            <person name="Tivey A."/>
            <person name="Walsh S.V."/>
            <person name="Warren T."/>
            <person name="Whitehead S."/>
            <person name="Woodward J.R."/>
            <person name="Volckaert G."/>
            <person name="Aert R."/>
            <person name="Robben J."/>
            <person name="Grymonprez B."/>
            <person name="Weltjens I."/>
            <person name="Vanstreels E."/>
            <person name="Rieger M."/>
            <person name="Schaefer M."/>
            <person name="Mueller-Auer S."/>
            <person name="Gabel C."/>
            <person name="Fuchs M."/>
            <person name="Duesterhoeft A."/>
            <person name="Fritzc C."/>
            <person name="Holzer E."/>
            <person name="Moestl D."/>
            <person name="Hilbert H."/>
            <person name="Borzym K."/>
            <person name="Langer I."/>
            <person name="Beck A."/>
            <person name="Lehrach H."/>
            <person name="Reinhardt R."/>
            <person name="Pohl T.M."/>
            <person name="Eger P."/>
            <person name="Zimmermann W."/>
            <person name="Wedler H."/>
            <person name="Wambutt R."/>
            <person name="Purnelle B."/>
            <person name="Goffeau A."/>
            <person name="Cadieu E."/>
            <person name="Dreano S."/>
            <person name="Gloux S."/>
            <person name="Lelaure V."/>
            <person name="Mottier S."/>
            <person name="Galibert F."/>
            <person name="Aves S.J."/>
            <person name="Xiang Z."/>
            <person name="Hunt C."/>
            <person name="Moore K."/>
            <person name="Hurst S.M."/>
            <person name="Lucas M."/>
            <person name="Rochet M."/>
            <person name="Gaillardin C."/>
            <person name="Tallada V.A."/>
            <person name="Garzon A."/>
            <person name="Thode G."/>
            <person name="Daga R.R."/>
            <person name="Cruzado L."/>
            <person name="Jimenez J."/>
            <person name="Sanchez M."/>
            <person name="del Rey F."/>
            <person name="Benito J."/>
            <person name="Dominguez A."/>
            <person name="Revuelta J.L."/>
            <person name="Moreno S."/>
            <person name="Armstrong J."/>
            <person name="Forsburg S.L."/>
            <person name="Cerutti L."/>
            <person name="Lowe T."/>
            <person name="McCombie W.R."/>
            <person name="Paulsen I."/>
            <person name="Potashkin J."/>
            <person name="Shpakovski G.V."/>
            <person name="Ussery D."/>
            <person name="Barrell B.G."/>
            <person name="Nurse P."/>
        </authorList>
    </citation>
    <scope>NUCLEOTIDE SEQUENCE [LARGE SCALE GENOMIC DNA]</scope>
    <source>
        <strain>972 / ATCC 24843</strain>
    </source>
</reference>
<reference key="2">
    <citation type="journal article" date="2011" name="Science">
        <title>Comparative functional genomics of the fission yeasts.</title>
        <authorList>
            <person name="Rhind N."/>
            <person name="Chen Z."/>
            <person name="Yassour M."/>
            <person name="Thompson D.A."/>
            <person name="Haas B.J."/>
            <person name="Habib N."/>
            <person name="Wapinski I."/>
            <person name="Roy S."/>
            <person name="Lin M.F."/>
            <person name="Heiman D.I."/>
            <person name="Young S.K."/>
            <person name="Furuya K."/>
            <person name="Guo Y."/>
            <person name="Pidoux A."/>
            <person name="Chen H.M."/>
            <person name="Robbertse B."/>
            <person name="Goldberg J.M."/>
            <person name="Aoki K."/>
            <person name="Bayne E.H."/>
            <person name="Berlin A.M."/>
            <person name="Desjardins C.A."/>
            <person name="Dobbs E."/>
            <person name="Dukaj L."/>
            <person name="Fan L."/>
            <person name="FitzGerald M.G."/>
            <person name="French C."/>
            <person name="Gujja S."/>
            <person name="Hansen K."/>
            <person name="Keifenheim D."/>
            <person name="Levin J.Z."/>
            <person name="Mosher R.A."/>
            <person name="Mueller C.A."/>
            <person name="Pfiffner J."/>
            <person name="Priest M."/>
            <person name="Russ C."/>
            <person name="Smialowska A."/>
            <person name="Swoboda P."/>
            <person name="Sykes S.M."/>
            <person name="Vaughn M."/>
            <person name="Vengrova S."/>
            <person name="Yoder R."/>
            <person name="Zeng Q."/>
            <person name="Allshire R."/>
            <person name="Baulcombe D."/>
            <person name="Birren B.W."/>
            <person name="Brown W."/>
            <person name="Ekwall K."/>
            <person name="Kellis M."/>
            <person name="Leatherwood J."/>
            <person name="Levin H."/>
            <person name="Margalit H."/>
            <person name="Martienssen R."/>
            <person name="Nieduszynski C.A."/>
            <person name="Spatafora J.W."/>
            <person name="Friedman N."/>
            <person name="Dalgaard J.Z."/>
            <person name="Baumann P."/>
            <person name="Niki H."/>
            <person name="Regev A."/>
            <person name="Nusbaum C."/>
        </authorList>
    </citation>
    <scope>REVISION OF GENE MODEL</scope>
</reference>
<reference evidence="9 10" key="3">
    <citation type="journal article" date="2000" name="Genes Cells">
        <title>Large-scale screening of intracellular protein localization in living fission yeast cells by the use of a GFP-fusion genomic DNA library.</title>
        <authorList>
            <person name="Ding D.-Q."/>
            <person name="Tomita Y."/>
            <person name="Yamamoto A."/>
            <person name="Chikashige Y."/>
            <person name="Haraguchi T."/>
            <person name="Hiraoka Y."/>
        </authorList>
    </citation>
    <scope>NUCLEOTIDE SEQUENCE [LARGE SCALE GENOMIC DNA] OF 116-293</scope>
    <scope>SUBCELLULAR LOCATION</scope>
    <source>
        <strain>ATCC 38364 / 968</strain>
    </source>
</reference>
<reference key="4">
    <citation type="journal article" date="2005" name="Curr. Biol.">
        <title>A large-scale screen in S. pombe identifies seven novel genes required for critical meiotic events.</title>
        <authorList>
            <person name="Martin-Castellanos C."/>
            <person name="Blanco M."/>
            <person name="Rozalen A.E."/>
            <person name="Perez-Hidalgo L."/>
            <person name="Garcia A.I."/>
            <person name="Conde F."/>
            <person name="Mata J."/>
            <person name="Ellermeier C."/>
            <person name="Davis L."/>
            <person name="San-Segundo P."/>
            <person name="Smith G.R."/>
            <person name="Moreno S."/>
        </authorList>
    </citation>
    <scope>FUNCTION IN MEIOSIS</scope>
</reference>
<reference key="5">
    <citation type="journal article" date="2005" name="J. Cell Sci.">
        <title>The nuclear rim protein Amo1 is required for proper microtubule cytoskeleton organisation in fission yeast.</title>
        <authorList>
            <person name="Pardo M."/>
            <person name="Nurse P."/>
        </authorList>
    </citation>
    <scope>FUNCTION</scope>
    <scope>SUBCELLULAR LOCATION</scope>
</reference>
<reference key="6">
    <citation type="journal article" date="2006" name="Nat. Biotechnol.">
        <title>ORFeome cloning and global analysis of protein localization in the fission yeast Schizosaccharomyces pombe.</title>
        <authorList>
            <person name="Matsuyama A."/>
            <person name="Arai R."/>
            <person name="Yashiroda Y."/>
            <person name="Shirai A."/>
            <person name="Kamata A."/>
            <person name="Sekido S."/>
            <person name="Kobayashi Y."/>
            <person name="Hashimoto A."/>
            <person name="Hamamoto M."/>
            <person name="Hiraoka Y."/>
            <person name="Horinouchi S."/>
            <person name="Yoshida M."/>
        </authorList>
    </citation>
    <scope>SUBCELLULAR LOCATION [LARGE SCALE ANALYSIS]</scope>
</reference>
<reference key="7">
    <citation type="journal article" date="2011" name="Curr. Biol.">
        <title>mmb1p binds mitochondria to dynamic microtubules.</title>
        <authorList>
            <person name="Fu C."/>
            <person name="Jain D."/>
            <person name="Costa J."/>
            <person name="Velve-Casquillas G."/>
            <person name="Tran P.T."/>
        </authorList>
    </citation>
    <scope>FUNCTION</scope>
    <scope>SUBCELLULAR LOCATION</scope>
    <scope>DISRUPTION PHENOTYPE</scope>
</reference>